<keyword id="KW-0066">ATP synthesis</keyword>
<keyword id="KW-0997">Cell inner membrane</keyword>
<keyword id="KW-1003">Cell membrane</keyword>
<keyword id="KW-0139">CF(1)</keyword>
<keyword id="KW-0375">Hydrogen ion transport</keyword>
<keyword id="KW-0406">Ion transport</keyword>
<keyword id="KW-0472">Membrane</keyword>
<keyword id="KW-1185">Reference proteome</keyword>
<keyword id="KW-0813">Transport</keyword>
<comment type="function">
    <text evidence="1">F(1)F(0) ATP synthase produces ATP from ADP in the presence of a proton or sodium gradient. F-type ATPases consist of two structural domains, F(1) containing the extramembraneous catalytic core and F(0) containing the membrane proton channel, linked together by a central stalk and a peripheral stalk. During catalysis, ATP synthesis in the catalytic domain of F(1) is coupled via a rotary mechanism of the central stalk subunits to proton translocation.</text>
</comment>
<comment type="function">
    <text evidence="1">This protein is part of the stalk that links CF(0) to CF(1). It either transmits conformational changes from CF(0) to CF(1) or is implicated in proton conduction.</text>
</comment>
<comment type="subunit">
    <text evidence="1">F-type ATPases have 2 components, F(1) - the catalytic core - and F(0) - the membrane proton channel. F(1) has five subunits: alpha(3), beta(3), gamma(1), delta(1), epsilon(1). F(0) has three main subunits: a(1), b(2) and c(10-14). The alpha and beta chains form an alternating ring which encloses part of the gamma chain. F(1) is attached to F(0) by a central stalk formed by the gamma and epsilon chains, while a peripheral stalk is formed by the delta and b chains.</text>
</comment>
<comment type="subcellular location">
    <subcellularLocation>
        <location evidence="1">Cell inner membrane</location>
        <topology evidence="1">Peripheral membrane protein</topology>
    </subcellularLocation>
</comment>
<comment type="similarity">
    <text evidence="1">Belongs to the ATPase delta chain family.</text>
</comment>
<accession>A5G9D5</accession>
<proteinExistence type="inferred from homology"/>
<reference key="1">
    <citation type="submission" date="2007-05" db="EMBL/GenBank/DDBJ databases">
        <title>Complete sequence of Geobacter uraniireducens Rf4.</title>
        <authorList>
            <consortium name="US DOE Joint Genome Institute"/>
            <person name="Copeland A."/>
            <person name="Lucas S."/>
            <person name="Lapidus A."/>
            <person name="Barry K."/>
            <person name="Detter J.C."/>
            <person name="Glavina del Rio T."/>
            <person name="Hammon N."/>
            <person name="Israni S."/>
            <person name="Dalin E."/>
            <person name="Tice H."/>
            <person name="Pitluck S."/>
            <person name="Chertkov O."/>
            <person name="Brettin T."/>
            <person name="Bruce D."/>
            <person name="Han C."/>
            <person name="Schmutz J."/>
            <person name="Larimer F."/>
            <person name="Land M."/>
            <person name="Hauser L."/>
            <person name="Kyrpides N."/>
            <person name="Mikhailova N."/>
            <person name="Shelobolina E."/>
            <person name="Aklujkar M."/>
            <person name="Lovley D."/>
            <person name="Richardson P."/>
        </authorList>
    </citation>
    <scope>NUCLEOTIDE SEQUENCE [LARGE SCALE GENOMIC DNA]</scope>
    <source>
        <strain>ATCC BAA-1134 / JCM 13001 / Rf4</strain>
    </source>
</reference>
<gene>
    <name evidence="1" type="primary">atpH</name>
    <name type="ordered locus">Gura_4260</name>
</gene>
<feature type="chain" id="PRO_0000370988" description="ATP synthase subunit delta">
    <location>
        <begin position="1"/>
        <end position="180"/>
    </location>
</feature>
<name>ATPD_GEOUR</name>
<evidence type="ECO:0000255" key="1">
    <source>
        <dbReference type="HAMAP-Rule" id="MF_01416"/>
    </source>
</evidence>
<dbReference type="EMBL" id="CP000698">
    <property type="protein sequence ID" value="ABQ28403.1"/>
    <property type="molecule type" value="Genomic_DNA"/>
</dbReference>
<dbReference type="RefSeq" id="WP_011941033.1">
    <property type="nucleotide sequence ID" value="NC_009483.1"/>
</dbReference>
<dbReference type="SMR" id="A5G9D5"/>
<dbReference type="STRING" id="351605.Gura_4260"/>
<dbReference type="KEGG" id="gur:Gura_4260"/>
<dbReference type="HOGENOM" id="CLU_085114_1_1_7"/>
<dbReference type="OrthoDB" id="9802471at2"/>
<dbReference type="Proteomes" id="UP000006695">
    <property type="component" value="Chromosome"/>
</dbReference>
<dbReference type="GO" id="GO:0005886">
    <property type="term" value="C:plasma membrane"/>
    <property type="evidence" value="ECO:0007669"/>
    <property type="project" value="UniProtKB-SubCell"/>
</dbReference>
<dbReference type="GO" id="GO:0045259">
    <property type="term" value="C:proton-transporting ATP synthase complex"/>
    <property type="evidence" value="ECO:0007669"/>
    <property type="project" value="UniProtKB-KW"/>
</dbReference>
<dbReference type="GO" id="GO:0046933">
    <property type="term" value="F:proton-transporting ATP synthase activity, rotational mechanism"/>
    <property type="evidence" value="ECO:0007669"/>
    <property type="project" value="UniProtKB-UniRule"/>
</dbReference>
<dbReference type="Gene3D" id="1.10.520.20">
    <property type="entry name" value="N-terminal domain of the delta subunit of the F1F0-ATP synthase"/>
    <property type="match status" value="1"/>
</dbReference>
<dbReference type="HAMAP" id="MF_01416">
    <property type="entry name" value="ATP_synth_delta_bact"/>
    <property type="match status" value="1"/>
</dbReference>
<dbReference type="InterPro" id="IPR026015">
    <property type="entry name" value="ATP_synth_OSCP/delta_N_sf"/>
</dbReference>
<dbReference type="InterPro" id="IPR000711">
    <property type="entry name" value="ATPase_OSCP/dsu"/>
</dbReference>
<dbReference type="NCBIfam" id="TIGR01145">
    <property type="entry name" value="ATP_synt_delta"/>
    <property type="match status" value="1"/>
</dbReference>
<dbReference type="NCBIfam" id="NF004402">
    <property type="entry name" value="PRK05758.2-2"/>
    <property type="match status" value="1"/>
</dbReference>
<dbReference type="NCBIfam" id="NF004403">
    <property type="entry name" value="PRK05758.2-4"/>
    <property type="match status" value="1"/>
</dbReference>
<dbReference type="PANTHER" id="PTHR11910">
    <property type="entry name" value="ATP SYNTHASE DELTA CHAIN"/>
    <property type="match status" value="1"/>
</dbReference>
<dbReference type="Pfam" id="PF00213">
    <property type="entry name" value="OSCP"/>
    <property type="match status" value="1"/>
</dbReference>
<dbReference type="PRINTS" id="PR00125">
    <property type="entry name" value="ATPASEDELTA"/>
</dbReference>
<dbReference type="SUPFAM" id="SSF47928">
    <property type="entry name" value="N-terminal domain of the delta subunit of the F1F0-ATP synthase"/>
    <property type="match status" value="1"/>
</dbReference>
<sequence length="180" mass="19456">MSTNAIARRYAKALVQIGAEEGQVDKFNSELTQFNTVLAANAGLTSVFSNPAYGIEAKREILKEIIGKLALSESVAKFLQLLLDRSRLAFLPQITESYGNFADDLSGVVRPTLTSGLPLEESQIEEIKTSLTKTTGKKVMLKVQVDPSLIGGVVTKIGDKVFDGSVKTQLAKIQDILQKG</sequence>
<protein>
    <recommendedName>
        <fullName evidence="1">ATP synthase subunit delta</fullName>
    </recommendedName>
    <alternativeName>
        <fullName evidence="1">ATP synthase F(1) sector subunit delta</fullName>
    </alternativeName>
    <alternativeName>
        <fullName evidence="1">F-type ATPase subunit delta</fullName>
        <shortName evidence="1">F-ATPase subunit delta</shortName>
    </alternativeName>
</protein>
<organism>
    <name type="scientific">Geotalea uraniireducens (strain Rf4)</name>
    <name type="common">Geobacter uraniireducens</name>
    <dbReference type="NCBI Taxonomy" id="351605"/>
    <lineage>
        <taxon>Bacteria</taxon>
        <taxon>Pseudomonadati</taxon>
        <taxon>Thermodesulfobacteriota</taxon>
        <taxon>Desulfuromonadia</taxon>
        <taxon>Geobacterales</taxon>
        <taxon>Geobacteraceae</taxon>
        <taxon>Geotalea</taxon>
    </lineage>
</organism>